<proteinExistence type="inferred from homology"/>
<protein>
    <recommendedName>
        <fullName evidence="1">UDP-N-acetylglucosamine--N-acetylmuramyl-(pentapeptide) pyrophosphoryl-undecaprenol N-acetylglucosamine transferase</fullName>
        <ecNumber evidence="1">2.4.1.227</ecNumber>
    </recommendedName>
    <alternativeName>
        <fullName evidence="1">Undecaprenyl-PP-MurNAc-pentapeptide-UDPGlcNAc GlcNAc transferase</fullName>
    </alternativeName>
</protein>
<keyword id="KW-0131">Cell cycle</keyword>
<keyword id="KW-0132">Cell division</keyword>
<keyword id="KW-0997">Cell inner membrane</keyword>
<keyword id="KW-1003">Cell membrane</keyword>
<keyword id="KW-0133">Cell shape</keyword>
<keyword id="KW-0961">Cell wall biogenesis/degradation</keyword>
<keyword id="KW-0328">Glycosyltransferase</keyword>
<keyword id="KW-0472">Membrane</keyword>
<keyword id="KW-0573">Peptidoglycan synthesis</keyword>
<keyword id="KW-1185">Reference proteome</keyword>
<keyword id="KW-0808">Transferase</keyword>
<gene>
    <name evidence="1" type="primary">murG</name>
    <name type="ordered locus">BP3023</name>
</gene>
<sequence length="357" mass="37907">MSAPTILIMAGGTGGHIMPGLAVAEVLRERGWRVLWLGNPDKMEGRLVPPRGIELVPLRFQGVRGRGAAALLKLPFLLARACAQAWRRLADIRPDVVLGMGGYVAFPGGVMAALRRTPLVVHEQNAVAGTANRWLARLARRVLSGFPGVLPRGEALGNPVRADLCALPEPAERYAGRSGALRVLVVGGSLGAHALNTTVPQALALLPEQARPQVVHQAGEQHLPALQQAYAQAGVQADCRAFIDDMADAMAQADLLICRAGAMTVSEVAAAGVAALFVPFPHAIDDHQTANARFLSDAQAAWLQPQASLTPQWLAQWLGQRTRQELQAVAGRARTHALPRAAAHIADVCEQAARRAS</sequence>
<organism>
    <name type="scientific">Bordetella pertussis (strain Tohama I / ATCC BAA-589 / NCTC 13251)</name>
    <dbReference type="NCBI Taxonomy" id="257313"/>
    <lineage>
        <taxon>Bacteria</taxon>
        <taxon>Pseudomonadati</taxon>
        <taxon>Pseudomonadota</taxon>
        <taxon>Betaproteobacteria</taxon>
        <taxon>Burkholderiales</taxon>
        <taxon>Alcaligenaceae</taxon>
        <taxon>Bordetella</taxon>
    </lineage>
</organism>
<evidence type="ECO:0000255" key="1">
    <source>
        <dbReference type="HAMAP-Rule" id="MF_00033"/>
    </source>
</evidence>
<reference key="1">
    <citation type="journal article" date="2003" name="Nat. Genet.">
        <title>Comparative analysis of the genome sequences of Bordetella pertussis, Bordetella parapertussis and Bordetella bronchiseptica.</title>
        <authorList>
            <person name="Parkhill J."/>
            <person name="Sebaihia M."/>
            <person name="Preston A."/>
            <person name="Murphy L.D."/>
            <person name="Thomson N.R."/>
            <person name="Harris D.E."/>
            <person name="Holden M.T.G."/>
            <person name="Churcher C.M."/>
            <person name="Bentley S.D."/>
            <person name="Mungall K.L."/>
            <person name="Cerdeno-Tarraga A.-M."/>
            <person name="Temple L."/>
            <person name="James K.D."/>
            <person name="Harris B."/>
            <person name="Quail M.A."/>
            <person name="Achtman M."/>
            <person name="Atkin R."/>
            <person name="Baker S."/>
            <person name="Basham D."/>
            <person name="Bason N."/>
            <person name="Cherevach I."/>
            <person name="Chillingworth T."/>
            <person name="Collins M."/>
            <person name="Cronin A."/>
            <person name="Davis P."/>
            <person name="Doggett J."/>
            <person name="Feltwell T."/>
            <person name="Goble A."/>
            <person name="Hamlin N."/>
            <person name="Hauser H."/>
            <person name="Holroyd S."/>
            <person name="Jagels K."/>
            <person name="Leather S."/>
            <person name="Moule S."/>
            <person name="Norberczak H."/>
            <person name="O'Neil S."/>
            <person name="Ormond D."/>
            <person name="Price C."/>
            <person name="Rabbinowitsch E."/>
            <person name="Rutter S."/>
            <person name="Sanders M."/>
            <person name="Saunders D."/>
            <person name="Seeger K."/>
            <person name="Sharp S."/>
            <person name="Simmonds M."/>
            <person name="Skelton J."/>
            <person name="Squares R."/>
            <person name="Squares S."/>
            <person name="Stevens K."/>
            <person name="Unwin L."/>
            <person name="Whitehead S."/>
            <person name="Barrell B.G."/>
            <person name="Maskell D.J."/>
        </authorList>
    </citation>
    <scope>NUCLEOTIDE SEQUENCE [LARGE SCALE GENOMIC DNA]</scope>
    <source>
        <strain>Tohama I / ATCC BAA-589 / NCTC 13251</strain>
    </source>
</reference>
<accession>Q7VUQ3</accession>
<comment type="function">
    <text evidence="1">Cell wall formation. Catalyzes the transfer of a GlcNAc subunit on undecaprenyl-pyrophosphoryl-MurNAc-pentapeptide (lipid intermediate I) to form undecaprenyl-pyrophosphoryl-MurNAc-(pentapeptide)GlcNAc (lipid intermediate II).</text>
</comment>
<comment type="catalytic activity">
    <reaction evidence="1">
        <text>di-trans,octa-cis-undecaprenyl diphospho-N-acetyl-alpha-D-muramoyl-L-alanyl-D-glutamyl-meso-2,6-diaminopimeloyl-D-alanyl-D-alanine + UDP-N-acetyl-alpha-D-glucosamine = di-trans,octa-cis-undecaprenyl diphospho-[N-acetyl-alpha-D-glucosaminyl-(1-&gt;4)]-N-acetyl-alpha-D-muramoyl-L-alanyl-D-glutamyl-meso-2,6-diaminopimeloyl-D-alanyl-D-alanine + UDP + H(+)</text>
        <dbReference type="Rhea" id="RHEA:31227"/>
        <dbReference type="ChEBI" id="CHEBI:15378"/>
        <dbReference type="ChEBI" id="CHEBI:57705"/>
        <dbReference type="ChEBI" id="CHEBI:58223"/>
        <dbReference type="ChEBI" id="CHEBI:61387"/>
        <dbReference type="ChEBI" id="CHEBI:61388"/>
        <dbReference type="EC" id="2.4.1.227"/>
    </reaction>
</comment>
<comment type="pathway">
    <text evidence="1">Cell wall biogenesis; peptidoglycan biosynthesis.</text>
</comment>
<comment type="subcellular location">
    <subcellularLocation>
        <location evidence="1">Cell inner membrane</location>
        <topology evidence="1">Peripheral membrane protein</topology>
        <orientation evidence="1">Cytoplasmic side</orientation>
    </subcellularLocation>
</comment>
<comment type="similarity">
    <text evidence="1">Belongs to the glycosyltransferase 28 family. MurG subfamily.</text>
</comment>
<name>MURG_BORPE</name>
<feature type="chain" id="PRO_0000109149" description="UDP-N-acetylglucosamine--N-acetylmuramyl-(pentapeptide) pyrophosphoryl-undecaprenol N-acetylglucosamine transferase">
    <location>
        <begin position="1"/>
        <end position="357"/>
    </location>
</feature>
<feature type="binding site" evidence="1">
    <location>
        <begin position="13"/>
        <end position="15"/>
    </location>
    <ligand>
        <name>UDP-N-acetyl-alpha-D-glucosamine</name>
        <dbReference type="ChEBI" id="CHEBI:57705"/>
    </ligand>
</feature>
<feature type="binding site" evidence="1">
    <location>
        <position position="125"/>
    </location>
    <ligand>
        <name>UDP-N-acetyl-alpha-D-glucosamine</name>
        <dbReference type="ChEBI" id="CHEBI:57705"/>
    </ligand>
</feature>
<feature type="binding site" evidence="1">
    <location>
        <position position="161"/>
    </location>
    <ligand>
        <name>UDP-N-acetyl-alpha-D-glucosamine</name>
        <dbReference type="ChEBI" id="CHEBI:57705"/>
    </ligand>
</feature>
<feature type="binding site" evidence="1">
    <location>
        <position position="189"/>
    </location>
    <ligand>
        <name>UDP-N-acetyl-alpha-D-glucosamine</name>
        <dbReference type="ChEBI" id="CHEBI:57705"/>
    </ligand>
</feature>
<feature type="binding site" evidence="1">
    <location>
        <position position="243"/>
    </location>
    <ligand>
        <name>UDP-N-acetyl-alpha-D-glucosamine</name>
        <dbReference type="ChEBI" id="CHEBI:57705"/>
    </ligand>
</feature>
<feature type="binding site" evidence="1">
    <location>
        <position position="288"/>
    </location>
    <ligand>
        <name>UDP-N-acetyl-alpha-D-glucosamine</name>
        <dbReference type="ChEBI" id="CHEBI:57705"/>
    </ligand>
</feature>
<dbReference type="EC" id="2.4.1.227" evidence="1"/>
<dbReference type="EMBL" id="BX640420">
    <property type="protein sequence ID" value="CAE43294.1"/>
    <property type="molecule type" value="Genomic_DNA"/>
</dbReference>
<dbReference type="RefSeq" id="NP_881598.1">
    <property type="nucleotide sequence ID" value="NC_002929.2"/>
</dbReference>
<dbReference type="RefSeq" id="WP_010931257.1">
    <property type="nucleotide sequence ID" value="NZ_CP039022.1"/>
</dbReference>
<dbReference type="SMR" id="Q7VUQ3"/>
<dbReference type="STRING" id="257313.BP3023"/>
<dbReference type="CAZy" id="GT28">
    <property type="family name" value="Glycosyltransferase Family 28"/>
</dbReference>
<dbReference type="PaxDb" id="257313-BP3023"/>
<dbReference type="GeneID" id="69602946"/>
<dbReference type="KEGG" id="bpe:BP3023"/>
<dbReference type="PATRIC" id="fig|257313.5.peg.3269"/>
<dbReference type="eggNOG" id="COG0707">
    <property type="taxonomic scope" value="Bacteria"/>
</dbReference>
<dbReference type="HOGENOM" id="CLU_037404_2_1_4"/>
<dbReference type="UniPathway" id="UPA00219"/>
<dbReference type="Proteomes" id="UP000002676">
    <property type="component" value="Chromosome"/>
</dbReference>
<dbReference type="GO" id="GO:0005886">
    <property type="term" value="C:plasma membrane"/>
    <property type="evidence" value="ECO:0007669"/>
    <property type="project" value="UniProtKB-SubCell"/>
</dbReference>
<dbReference type="GO" id="GO:0051991">
    <property type="term" value="F:UDP-N-acetyl-D-glucosamine:N-acetylmuramoyl-L-alanyl-D-glutamyl-meso-2,6-diaminopimelyl-D-alanyl-D-alanine-diphosphoundecaprenol 4-beta-N-acetylglucosaminlytransferase activity"/>
    <property type="evidence" value="ECO:0007669"/>
    <property type="project" value="RHEA"/>
</dbReference>
<dbReference type="GO" id="GO:0050511">
    <property type="term" value="F:undecaprenyldiphospho-muramoylpentapeptide beta-N-acetylglucosaminyltransferase activity"/>
    <property type="evidence" value="ECO:0007669"/>
    <property type="project" value="UniProtKB-UniRule"/>
</dbReference>
<dbReference type="GO" id="GO:0005975">
    <property type="term" value="P:carbohydrate metabolic process"/>
    <property type="evidence" value="ECO:0007669"/>
    <property type="project" value="InterPro"/>
</dbReference>
<dbReference type="GO" id="GO:0051301">
    <property type="term" value="P:cell division"/>
    <property type="evidence" value="ECO:0007669"/>
    <property type="project" value="UniProtKB-KW"/>
</dbReference>
<dbReference type="GO" id="GO:0071555">
    <property type="term" value="P:cell wall organization"/>
    <property type="evidence" value="ECO:0007669"/>
    <property type="project" value="UniProtKB-KW"/>
</dbReference>
<dbReference type="GO" id="GO:0030259">
    <property type="term" value="P:lipid glycosylation"/>
    <property type="evidence" value="ECO:0007669"/>
    <property type="project" value="UniProtKB-UniRule"/>
</dbReference>
<dbReference type="GO" id="GO:0009252">
    <property type="term" value="P:peptidoglycan biosynthetic process"/>
    <property type="evidence" value="ECO:0007669"/>
    <property type="project" value="UniProtKB-UniRule"/>
</dbReference>
<dbReference type="GO" id="GO:0008360">
    <property type="term" value="P:regulation of cell shape"/>
    <property type="evidence" value="ECO:0007669"/>
    <property type="project" value="UniProtKB-KW"/>
</dbReference>
<dbReference type="CDD" id="cd03785">
    <property type="entry name" value="GT28_MurG"/>
    <property type="match status" value="1"/>
</dbReference>
<dbReference type="Gene3D" id="3.40.50.2000">
    <property type="entry name" value="Glycogen Phosphorylase B"/>
    <property type="match status" value="2"/>
</dbReference>
<dbReference type="HAMAP" id="MF_00033">
    <property type="entry name" value="MurG"/>
    <property type="match status" value="1"/>
</dbReference>
<dbReference type="InterPro" id="IPR006009">
    <property type="entry name" value="GlcNAc_MurG"/>
</dbReference>
<dbReference type="InterPro" id="IPR007235">
    <property type="entry name" value="Glyco_trans_28_C"/>
</dbReference>
<dbReference type="InterPro" id="IPR004276">
    <property type="entry name" value="GlycoTrans_28_N"/>
</dbReference>
<dbReference type="NCBIfam" id="TIGR01133">
    <property type="entry name" value="murG"/>
    <property type="match status" value="1"/>
</dbReference>
<dbReference type="PANTHER" id="PTHR21015:SF22">
    <property type="entry name" value="GLYCOSYLTRANSFERASE"/>
    <property type="match status" value="1"/>
</dbReference>
<dbReference type="PANTHER" id="PTHR21015">
    <property type="entry name" value="UDP-N-ACETYLGLUCOSAMINE--N-ACETYLMURAMYL-(PENTAPEPTIDE) PYROPHOSPHORYL-UNDECAPRENOL N-ACETYLGLUCOSAMINE TRANSFERASE 1"/>
    <property type="match status" value="1"/>
</dbReference>
<dbReference type="Pfam" id="PF04101">
    <property type="entry name" value="Glyco_tran_28_C"/>
    <property type="match status" value="1"/>
</dbReference>
<dbReference type="Pfam" id="PF03033">
    <property type="entry name" value="Glyco_transf_28"/>
    <property type="match status" value="1"/>
</dbReference>
<dbReference type="SUPFAM" id="SSF53756">
    <property type="entry name" value="UDP-Glycosyltransferase/glycogen phosphorylase"/>
    <property type="match status" value="1"/>
</dbReference>